<organismHost>
    <name type="scientific">Aves</name>
    <dbReference type="NCBI Taxonomy" id="8782"/>
</organismHost>
<dbReference type="EMBL" id="CY015104">
    <property type="protein sequence ID" value="ABI85139.1"/>
    <property type="molecule type" value="Genomic_RNA"/>
</dbReference>
<dbReference type="SMR" id="Q0A2E4"/>
<dbReference type="GO" id="GO:0020002">
    <property type="term" value="C:host cell plasma membrane"/>
    <property type="evidence" value="ECO:0007669"/>
    <property type="project" value="UniProtKB-SubCell"/>
</dbReference>
<dbReference type="GO" id="GO:0016020">
    <property type="term" value="C:membrane"/>
    <property type="evidence" value="ECO:0007669"/>
    <property type="project" value="UniProtKB-UniRule"/>
</dbReference>
<dbReference type="GO" id="GO:0055036">
    <property type="term" value="C:virion membrane"/>
    <property type="evidence" value="ECO:0007669"/>
    <property type="project" value="UniProtKB-SubCell"/>
</dbReference>
<dbReference type="GO" id="GO:0005216">
    <property type="term" value="F:monoatomic ion channel activity"/>
    <property type="evidence" value="ECO:0007669"/>
    <property type="project" value="UniProtKB-UniRule"/>
</dbReference>
<dbReference type="GO" id="GO:0015078">
    <property type="term" value="F:proton transmembrane transporter activity"/>
    <property type="evidence" value="ECO:0007669"/>
    <property type="project" value="UniProtKB-UniRule"/>
</dbReference>
<dbReference type="GO" id="GO:0051259">
    <property type="term" value="P:protein complex oligomerization"/>
    <property type="evidence" value="ECO:0007669"/>
    <property type="project" value="UniProtKB-UniRule"/>
</dbReference>
<dbReference type="GO" id="GO:0044694">
    <property type="term" value="P:symbiont genome entry into host cell via pore formation in plasma membrane"/>
    <property type="evidence" value="ECO:0007669"/>
    <property type="project" value="UniProtKB-UniRule"/>
</dbReference>
<dbReference type="GO" id="GO:0140321">
    <property type="term" value="P:symbiont-mediated suppression of host autophagy"/>
    <property type="evidence" value="ECO:0007669"/>
    <property type="project" value="UniProtKB-KW"/>
</dbReference>
<dbReference type="Gene3D" id="6.10.250.1640">
    <property type="match status" value="1"/>
</dbReference>
<dbReference type="HAMAP" id="MF_04069">
    <property type="entry name" value="INFV_M2"/>
    <property type="match status" value="1"/>
</dbReference>
<dbReference type="InterPro" id="IPR002089">
    <property type="entry name" value="Flu_M2"/>
</dbReference>
<dbReference type="Pfam" id="PF00599">
    <property type="entry name" value="Flu_M2"/>
    <property type="match status" value="1"/>
</dbReference>
<comment type="function">
    <text evidence="1">Forms a proton-selective ion channel that is necessary for the efficient release of the viral genome during virus entry. After attaching to the cell surface, the virion enters the cell by endocytosis. Acidification of the endosome triggers M2 ion channel activity. The influx of protons into virion interior is believed to disrupt interactions between the viral ribonucleoprotein (RNP), matrix protein 1 (M1), and lipid bilayers, thereby freeing the viral genome from interaction with viral proteins and enabling RNA segments to migrate to the host cell nucleus, where influenza virus RNA transcription and replication occur. Also plays a role in viral proteins secretory pathway. Elevates the intravesicular pH of normally acidic compartments, such as trans-Golgi network, preventing newly formed hemagglutinin from premature switching to the fusion-active conformation.</text>
</comment>
<comment type="activity regulation">
    <text>The M2 protein from most influenza A strains is inhibited by amantadine and rimantadine, resulting in viral uncoating incapacity. Emergence of amantadine-resistant variants is usually rapid.</text>
</comment>
<comment type="subunit">
    <text evidence="1">Homotetramer; composed of two disulfide-linked dimers held together by non-covalent interactions. May interact with matrix protein 1.</text>
</comment>
<comment type="subcellular location">
    <subcellularLocation>
        <location evidence="1">Virion membrane</location>
    </subcellularLocation>
    <subcellularLocation>
        <location evidence="1">Host apical cell membrane</location>
        <topology evidence="1">Single-pass type III membrane protein</topology>
    </subcellularLocation>
    <text evidence="1">Abundantly expressed at the apical plasma membrane in infected polarized epithelial cells, in close proximity to budding and assembled virions. Minor component of virions (only 16-20 molecules/virion).</text>
</comment>
<comment type="alternative products">
    <event type="alternative splicing"/>
    <isoform>
        <id>Q0A2E4-1</id>
        <name>M2</name>
        <sequence type="displayed"/>
    </isoform>
    <isoform>
        <id>Q0A2E3-1</id>
        <name>M1</name>
        <sequence type="external"/>
    </isoform>
    <text>Only the first 9 residues are shared by the 2 isoforms.</text>
</comment>
<comment type="domain">
    <text evidence="1">Cytoplasmic tail plays an important role in virion assembly and morphogenesis.</text>
</comment>
<comment type="miscellaneous">
    <text evidence="1">When the channel is activated, one or more imidazole moieties of His-37 probably become bi-protonated.</text>
</comment>
<comment type="similarity">
    <text evidence="1">Belongs to the influenza viruses matrix protein M2 family.</text>
</comment>
<reference key="1">
    <citation type="journal article" date="2006" name="Science">
        <title>Large-scale sequence analysis of avian influenza isolates.</title>
        <authorList>
            <person name="Obenauer J.C."/>
            <person name="Denson J."/>
            <person name="Mehta P.K."/>
            <person name="Su X."/>
            <person name="Mukatira S."/>
            <person name="Finkelstein D.B."/>
            <person name="Xu X."/>
            <person name="Wang J."/>
            <person name="Ma J."/>
            <person name="Fan Y."/>
            <person name="Rakestraw K.M."/>
            <person name="Webster R.G."/>
            <person name="Hoffmann E."/>
            <person name="Krauss S."/>
            <person name="Zheng J."/>
            <person name="Zhang Z."/>
            <person name="Naeve C.W."/>
        </authorList>
    </citation>
    <scope>NUCLEOTIDE SEQUENCE [GENOMIC RNA]</scope>
</reference>
<organism>
    <name type="scientific">Influenza A virus (strain A/Turkey/Ontario/7732/1966 H5N9)</name>
    <dbReference type="NCBI Taxonomy" id="380301"/>
    <lineage>
        <taxon>Viruses</taxon>
        <taxon>Riboviria</taxon>
        <taxon>Orthornavirae</taxon>
        <taxon>Negarnaviricota</taxon>
        <taxon>Polyploviricotina</taxon>
        <taxon>Insthoviricetes</taxon>
        <taxon>Articulavirales</taxon>
        <taxon>Orthomyxoviridae</taxon>
        <taxon>Alphainfluenzavirus</taxon>
        <taxon>Alphainfluenzavirus influenzae</taxon>
        <taxon>Influenza A virus</taxon>
    </lineage>
</organism>
<gene>
    <name evidence="1" type="primary">M</name>
</gene>
<sequence>MSLLTEVETPTRNGWECKCSDSSDPLVIAASIIGILHLILCILDRLFFKCIYRRLKYGLKRGPSTEGVPESMREEYRQEQQSAVDVDDGHFVNIELE</sequence>
<name>M2_I66A0</name>
<keyword id="KW-0025">Alternative splicing</keyword>
<keyword id="KW-1015">Disulfide bond</keyword>
<keyword id="KW-1032">Host cell membrane</keyword>
<keyword id="KW-1043">Host membrane</keyword>
<keyword id="KW-0945">Host-virus interaction</keyword>
<keyword id="KW-0375">Hydrogen ion transport</keyword>
<keyword id="KW-1083">Inhibition of host autophagy by virus</keyword>
<keyword id="KW-0407">Ion channel</keyword>
<keyword id="KW-0406">Ion transport</keyword>
<keyword id="KW-0449">Lipoprotein</keyword>
<keyword id="KW-0472">Membrane</keyword>
<keyword id="KW-0564">Palmitate</keyword>
<keyword id="KW-0597">Phosphoprotein</keyword>
<keyword id="KW-0735">Signal-anchor</keyword>
<keyword id="KW-0812">Transmembrane</keyword>
<keyword id="KW-1133">Transmembrane helix</keyword>
<keyword id="KW-0813">Transport</keyword>
<keyword id="KW-1182">Viral ion channel</keyword>
<keyword id="KW-0946">Virion</keyword>
<protein>
    <recommendedName>
        <fullName evidence="1">Matrix protein 2</fullName>
    </recommendedName>
    <alternativeName>
        <fullName evidence="1">Proton channel protein M2</fullName>
    </alternativeName>
</protein>
<accession>Q0A2E4</accession>
<proteinExistence type="inferred from homology"/>
<feature type="chain" id="PRO_0000326343" description="Matrix protein 2">
    <location>
        <begin position="1"/>
        <end position="97"/>
    </location>
</feature>
<feature type="topological domain" description="Virion surface" evidence="1">
    <location>
        <begin position="1"/>
        <end position="22"/>
    </location>
</feature>
<feature type="transmembrane region" description="Helical; Signal-anchor for type III membrane protein" evidence="1">
    <location>
        <begin position="23"/>
        <end position="43"/>
    </location>
</feature>
<feature type="topological domain" description="Intravirion" evidence="1">
    <location>
        <begin position="44"/>
        <end position="97"/>
    </location>
</feature>
<feature type="region of interest" description="Disordered" evidence="2">
    <location>
        <begin position="60"/>
        <end position="83"/>
    </location>
</feature>
<feature type="site" description="Essential for channel activity, possibly by being protonated during channel activation, and by forming the channel gate and the selective filter" evidence="1">
    <location>
        <position position="37"/>
    </location>
</feature>
<feature type="modified residue" description="Phosphoserine; by host" evidence="1">
    <location>
        <position position="64"/>
    </location>
</feature>
<feature type="modified residue" description="Phosphoserine; by host" evidence="1">
    <location>
        <position position="82"/>
    </location>
</feature>
<feature type="lipid moiety-binding region" description="S-palmitoyl cysteine; by host" evidence="1">
    <location>
        <position position="50"/>
    </location>
</feature>
<feature type="disulfide bond" description="Interchain (with C-17)" evidence="1">
    <location>
        <position position="17"/>
    </location>
</feature>
<feature type="disulfide bond" description="Interchain (with C-19)" evidence="1">
    <location>
        <position position="19"/>
    </location>
</feature>
<evidence type="ECO:0000255" key="1">
    <source>
        <dbReference type="HAMAP-Rule" id="MF_04069"/>
    </source>
</evidence>
<evidence type="ECO:0000256" key="2">
    <source>
        <dbReference type="SAM" id="MobiDB-lite"/>
    </source>
</evidence>